<gene>
    <name type="primary">14</name>
</gene>
<name>HOLIN_BPB03</name>
<sequence>MMNMIEWTKHVLESDDTKLIYWLTLLMVCMIVDTILGIVIARINPKEKFSSFKMKTGILIKVSEMIIALLAVPFALPFPAGLPLLYTVYTALCVSEMYSIFGHLRVVDDKSNFLSIIEGFFKQTYRKDKGDK</sequence>
<comment type="function">
    <molecule>Isoform Holin</molecule>
    <text evidence="1">Accumulates harmlessly in the cytoplasmic membrane until it reaches a critical concentration that triggers the formation of micron-scale pores (holes) causing host cell membrane disruption and endolysin escape into the periplasmic space (By similarity). Determines the precise timing of host cell lysis (By similarity). Participates with the endolysin and spanin proteins in the sequential events which lead to the programmed host cell lysis releasing the mature viral particles from the host cell (By similarity).</text>
</comment>
<comment type="function">
    <molecule>Isoform Antiholin</molecule>
    <text evidence="1">Counteracts the aggregation of the holin molecules and thus of pore formation.</text>
</comment>
<comment type="subunit">
    <molecule>Isoform Holin</molecule>
    <text evidence="1">Homomultimer. Interacts with isoform Antiholin; this interaction blocks the holin homomultimerization and delays host cell lysis.</text>
</comment>
<comment type="subcellular location">
    <subcellularLocation>
        <location evidence="1">Host cell inner membrane</location>
        <topology evidence="1">Multi-pass membrane protein</topology>
    </subcellularLocation>
    <text evidence="3">Classified as a class I holin.</text>
</comment>
<comment type="alternative products">
    <event type="alternative initiation"/>
    <isoform>
        <id>Q37895-1</id>
        <name evidence="1">Antiholin</name>
        <sequence type="displayed"/>
    </isoform>
    <isoform>
        <id>Q37895-2</id>
        <name evidence="1">Holin</name>
        <sequence type="described" ref="VSP_058248"/>
    </isoform>
</comment>
<comment type="domain">
    <text evidence="1">Isoform Holin has 3 transmembrane regions whereas isoform Antiholin lacks the first transmembrane region.</text>
</comment>
<comment type="domain">
    <text evidence="1">The C-terminus acts as a cytoplasmic regulatory region.</text>
</comment>
<comment type="similarity">
    <text evidence="3">Belongs to the bacteriophage holin family. phi29likevirus holin subfamily.</text>
</comment>
<feature type="chain" id="PRO_0000106597" description="Antiholin">
    <location>
        <begin position="1"/>
        <end position="132"/>
    </location>
</feature>
<feature type="topological domain" description="Cytoplasmic" evidence="1">
    <location>
        <begin position="1"/>
        <end position="61"/>
    </location>
</feature>
<feature type="transmembrane region" description="Helical" evidence="2">
    <location>
        <begin position="62"/>
        <end position="80"/>
    </location>
</feature>
<feature type="topological domain" description="Periplasmic" evidence="1">
    <location>
        <begin position="81"/>
        <end position="85"/>
    </location>
</feature>
<feature type="transmembrane region" description="Helical" evidence="2">
    <location>
        <begin position="86"/>
        <end position="107"/>
    </location>
</feature>
<feature type="topological domain" description="Cytoplasmic" evidence="1">
    <location>
        <begin position="108"/>
        <end position="132"/>
    </location>
</feature>
<feature type="splice variant" id="VSP_058248" description="In isoform Holin." evidence="1">
    <location>
        <begin position="1"/>
        <end position="3"/>
    </location>
</feature>
<feature type="topological domain" description="Periplasmic" evidence="1">
    <location sequence="Q37895-2">
        <begin position="1"/>
        <end position="16"/>
    </location>
</feature>
<feature type="transmembrane region" description="Helical" evidence="2">
    <location sequence="Q37895-2">
        <begin position="17"/>
        <end position="38"/>
    </location>
</feature>
<feature type="topological domain" description="Cytoplasmic" evidence="1">
    <location sequence="Q37895-2">
        <begin position="39"/>
        <end position="58"/>
    </location>
</feature>
<proteinExistence type="inferred from homology"/>
<organism>
    <name type="scientific">Bacillus phage B103</name>
    <name type="common">Bacteriophage B103</name>
    <dbReference type="NCBI Taxonomy" id="2994042"/>
    <lineage>
        <taxon>Viruses</taxon>
        <taxon>Duplodnaviria</taxon>
        <taxon>Heunggongvirae</taxon>
        <taxon>Uroviricota</taxon>
        <taxon>Caudoviricetes</taxon>
        <taxon>Salasmaviridae</taxon>
        <taxon>Picovirinae</taxon>
        <taxon>Beecentumtrevirus</taxon>
        <taxon>Beecentumtrevirus B103</taxon>
    </lineage>
</organism>
<keyword id="KW-0024">Alternative initiation</keyword>
<keyword id="KW-0204">Cytolysis</keyword>
<keyword id="KW-1030">Host cell inner membrane</keyword>
<keyword id="KW-0578">Host cell lysis by virus</keyword>
<keyword id="KW-1032">Host cell membrane</keyword>
<keyword id="KW-1043">Host membrane</keyword>
<keyword id="KW-0426">Late protein</keyword>
<keyword id="KW-0472">Membrane</keyword>
<keyword id="KW-0812">Transmembrane</keyword>
<keyword id="KW-1133">Transmembrane helix</keyword>
<keyword id="KW-1188">Viral release from host cell</keyword>
<accession>Q37895</accession>
<organismHost>
    <name type="scientific">Bacillus subtilis</name>
    <dbReference type="NCBI Taxonomy" id="1423"/>
</organismHost>
<dbReference type="EMBL" id="X99260">
    <property type="protein sequence ID" value="CAA67662.1"/>
    <property type="molecule type" value="Genomic_DNA"/>
</dbReference>
<dbReference type="RefSeq" id="NP_690648.1">
    <molecule id="Q37895-1"/>
    <property type="nucleotide sequence ID" value="NC_004165.1"/>
</dbReference>
<dbReference type="TCDB" id="1.E.10.1.4">
    <property type="family name" value="the bacillus subtilis Phi29 holin (Phi29 holin) family"/>
</dbReference>
<dbReference type="KEGG" id="vg:955368"/>
<dbReference type="Proteomes" id="UP000000971">
    <property type="component" value="Segment"/>
</dbReference>
<dbReference type="GO" id="GO:0020002">
    <property type="term" value="C:host cell plasma membrane"/>
    <property type="evidence" value="ECO:0007669"/>
    <property type="project" value="UniProtKB-SubCell"/>
</dbReference>
<dbReference type="GO" id="GO:0016020">
    <property type="term" value="C:membrane"/>
    <property type="evidence" value="ECO:0007669"/>
    <property type="project" value="UniProtKB-KW"/>
</dbReference>
<dbReference type="GO" id="GO:0031640">
    <property type="term" value="P:killing of cells of another organism"/>
    <property type="evidence" value="ECO:0007669"/>
    <property type="project" value="UniProtKB-KW"/>
</dbReference>
<dbReference type="InterPro" id="IPR006480">
    <property type="entry name" value="Phage_holin_4_1"/>
</dbReference>
<dbReference type="NCBIfam" id="TIGR01593">
    <property type="entry name" value="holin_tox_secr"/>
    <property type="match status" value="1"/>
</dbReference>
<dbReference type="Pfam" id="PF05105">
    <property type="entry name" value="Phage_holin_4_1"/>
    <property type="match status" value="1"/>
</dbReference>
<protein>
    <recommendedName>
        <fullName evidence="1">Antiholin</fullName>
    </recommendedName>
    <alternativeName>
        <fullName>Gene product 14</fullName>
        <shortName>gp14</shortName>
    </alternativeName>
    <alternativeName>
        <fullName>Protein p14</fullName>
    </alternativeName>
    <domain>
        <recommendedName>
            <fullName evidence="1">Holin</fullName>
        </recommendedName>
    </domain>
</protein>
<reference key="1">
    <citation type="journal article" date="1997" name="Gene">
        <title>Bacteriophage B103: complete DNA sequence of its genome and relationship to other Bacillus phages.</title>
        <authorList>
            <person name="Pecenkova T."/>
            <person name="Benes V."/>
            <person name="Paces J."/>
            <person name="Vlcek C."/>
            <person name="Paces V."/>
        </authorList>
    </citation>
    <scope>NUCLEOTIDE SEQUENCE [LARGE SCALE GENOMIC DNA]</scope>
</reference>
<evidence type="ECO:0000250" key="1">
    <source>
        <dbReference type="UniProtKB" id="P03705"/>
    </source>
</evidence>
<evidence type="ECO:0000255" key="2"/>
<evidence type="ECO:0000305" key="3"/>